<evidence type="ECO:0000255" key="1">
    <source>
        <dbReference type="HAMAP-Rule" id="MF_01147"/>
    </source>
</evidence>
<keyword id="KW-0997">Cell inner membrane</keyword>
<keyword id="KW-1003">Cell membrane</keyword>
<keyword id="KW-0472">Membrane</keyword>
<keyword id="KW-0808">Transferase</keyword>
<keyword id="KW-0812">Transmembrane</keyword>
<keyword id="KW-1133">Transmembrane helix</keyword>
<proteinExistence type="inferred from homology"/>
<feature type="chain" id="PRO_1000065480" description="Phosphatidylglycerol--prolipoprotein diacylglyceryl transferase">
    <location>
        <begin position="1"/>
        <end position="266"/>
    </location>
</feature>
<feature type="transmembrane region" description="Helical" evidence="1">
    <location>
        <begin position="10"/>
        <end position="30"/>
    </location>
</feature>
<feature type="transmembrane region" description="Helical" evidence="1">
    <location>
        <begin position="56"/>
        <end position="76"/>
    </location>
</feature>
<feature type="transmembrane region" description="Helical" evidence="1">
    <location>
        <begin position="92"/>
        <end position="112"/>
    </location>
</feature>
<feature type="transmembrane region" description="Helical" evidence="1">
    <location>
        <begin position="120"/>
        <end position="140"/>
    </location>
</feature>
<feature type="transmembrane region" description="Helical" evidence="1">
    <location>
        <begin position="171"/>
        <end position="191"/>
    </location>
</feature>
<feature type="transmembrane region" description="Helical" evidence="1">
    <location>
        <begin position="199"/>
        <end position="219"/>
    </location>
</feature>
<feature type="transmembrane region" description="Helical" evidence="1">
    <location>
        <begin position="233"/>
        <end position="253"/>
    </location>
</feature>
<feature type="binding site" evidence="1">
    <location>
        <position position="139"/>
    </location>
    <ligand>
        <name>a 1,2-diacyl-sn-glycero-3-phospho-(1'-sn-glycerol)</name>
        <dbReference type="ChEBI" id="CHEBI:64716"/>
    </ligand>
</feature>
<name>LGT_PSEP7</name>
<protein>
    <recommendedName>
        <fullName evidence="1">Phosphatidylglycerol--prolipoprotein diacylglyceryl transferase</fullName>
        <ecNumber evidence="1">2.5.1.145</ecNumber>
    </recommendedName>
</protein>
<reference key="1">
    <citation type="submission" date="2007-06" db="EMBL/GenBank/DDBJ databases">
        <authorList>
            <person name="Dodson R.J."/>
            <person name="Harkins D."/>
            <person name="Paulsen I.T."/>
        </authorList>
    </citation>
    <scope>NUCLEOTIDE SEQUENCE [LARGE SCALE GENOMIC DNA]</scope>
    <source>
        <strain>DSM 24068 / PA7</strain>
    </source>
</reference>
<accession>A6UYE4</accession>
<dbReference type="EC" id="2.5.1.145" evidence="1"/>
<dbReference type="EMBL" id="CP000744">
    <property type="protein sequence ID" value="ABR84025.1"/>
    <property type="molecule type" value="Genomic_DNA"/>
</dbReference>
<dbReference type="RefSeq" id="WP_012073954.1">
    <property type="nucleotide sequence ID" value="NC_009656.1"/>
</dbReference>
<dbReference type="SMR" id="A6UYE4"/>
<dbReference type="KEGG" id="pap:PSPA7_0434"/>
<dbReference type="HOGENOM" id="CLU_013386_1_0_6"/>
<dbReference type="UniPathway" id="UPA00664"/>
<dbReference type="Proteomes" id="UP000001582">
    <property type="component" value="Chromosome"/>
</dbReference>
<dbReference type="GO" id="GO:0005886">
    <property type="term" value="C:plasma membrane"/>
    <property type="evidence" value="ECO:0007669"/>
    <property type="project" value="UniProtKB-SubCell"/>
</dbReference>
<dbReference type="GO" id="GO:0008961">
    <property type="term" value="F:phosphatidylglycerol-prolipoprotein diacylglyceryl transferase activity"/>
    <property type="evidence" value="ECO:0007669"/>
    <property type="project" value="UniProtKB-UniRule"/>
</dbReference>
<dbReference type="GO" id="GO:0042158">
    <property type="term" value="P:lipoprotein biosynthetic process"/>
    <property type="evidence" value="ECO:0007669"/>
    <property type="project" value="UniProtKB-UniRule"/>
</dbReference>
<dbReference type="HAMAP" id="MF_01147">
    <property type="entry name" value="Lgt"/>
    <property type="match status" value="1"/>
</dbReference>
<dbReference type="InterPro" id="IPR001640">
    <property type="entry name" value="Lgt"/>
</dbReference>
<dbReference type="NCBIfam" id="TIGR00544">
    <property type="entry name" value="lgt"/>
    <property type="match status" value="1"/>
</dbReference>
<dbReference type="PANTHER" id="PTHR30589:SF0">
    <property type="entry name" value="PHOSPHATIDYLGLYCEROL--PROLIPOPROTEIN DIACYLGLYCERYL TRANSFERASE"/>
    <property type="match status" value="1"/>
</dbReference>
<dbReference type="PANTHER" id="PTHR30589">
    <property type="entry name" value="PROLIPOPROTEIN DIACYLGLYCERYL TRANSFERASE"/>
    <property type="match status" value="1"/>
</dbReference>
<dbReference type="Pfam" id="PF01790">
    <property type="entry name" value="LGT"/>
    <property type="match status" value="1"/>
</dbReference>
<dbReference type="PROSITE" id="PS01311">
    <property type="entry name" value="LGT"/>
    <property type="match status" value="1"/>
</dbReference>
<sequence>MLTYPQIDPVALAIGPLKIHWYGLMYLIGIGGAWLLASRRMKRFDPSWTKERLSDLVFWVACGVILGGRLGYVLFYNLDEYIANPTLIFEVWKGGMSFHGGLLGVMLAVWWFGKRHGKSFFQLMDFIAPLVPIGLGAGRIGNFINSELWGKVSDVPWAMVFPNGGPLPRHPSQLYQFALEGVALFVILWLFTRKPRPTASVSGLFVLCYGIFRFVVEFVRVPDAQLGYLAWGWLTMGQVLCVPMVLAGIALMVWAYRRDAAQPKAA</sequence>
<gene>
    <name evidence="1" type="primary">lgt</name>
    <name type="ordered locus">PSPA7_0434</name>
</gene>
<comment type="function">
    <text evidence="1">Catalyzes the transfer of the diacylglyceryl group from phosphatidylglycerol to the sulfhydryl group of the N-terminal cysteine of a prolipoprotein, the first step in the formation of mature lipoproteins.</text>
</comment>
<comment type="catalytic activity">
    <reaction evidence="1">
        <text>L-cysteinyl-[prolipoprotein] + a 1,2-diacyl-sn-glycero-3-phospho-(1'-sn-glycerol) = an S-1,2-diacyl-sn-glyceryl-L-cysteinyl-[prolipoprotein] + sn-glycerol 1-phosphate + H(+)</text>
        <dbReference type="Rhea" id="RHEA:56712"/>
        <dbReference type="Rhea" id="RHEA-COMP:14679"/>
        <dbReference type="Rhea" id="RHEA-COMP:14680"/>
        <dbReference type="ChEBI" id="CHEBI:15378"/>
        <dbReference type="ChEBI" id="CHEBI:29950"/>
        <dbReference type="ChEBI" id="CHEBI:57685"/>
        <dbReference type="ChEBI" id="CHEBI:64716"/>
        <dbReference type="ChEBI" id="CHEBI:140658"/>
        <dbReference type="EC" id="2.5.1.145"/>
    </reaction>
</comment>
<comment type="pathway">
    <text evidence="1">Protein modification; lipoprotein biosynthesis (diacylglyceryl transfer).</text>
</comment>
<comment type="subcellular location">
    <subcellularLocation>
        <location evidence="1">Cell inner membrane</location>
        <topology evidence="1">Multi-pass membrane protein</topology>
    </subcellularLocation>
</comment>
<comment type="similarity">
    <text evidence="1">Belongs to the Lgt family.</text>
</comment>
<organism>
    <name type="scientific">Pseudomonas paraeruginosa (strain DSM 24068 / PA7)</name>
    <name type="common">Pseudomonas aeruginosa (strain PA7)</name>
    <dbReference type="NCBI Taxonomy" id="381754"/>
    <lineage>
        <taxon>Bacteria</taxon>
        <taxon>Pseudomonadati</taxon>
        <taxon>Pseudomonadota</taxon>
        <taxon>Gammaproteobacteria</taxon>
        <taxon>Pseudomonadales</taxon>
        <taxon>Pseudomonadaceae</taxon>
        <taxon>Pseudomonas</taxon>
        <taxon>Pseudomonas paraeruginosa</taxon>
    </lineage>
</organism>